<reference key="1">
    <citation type="journal article" date="2000" name="Proc. Natl. Acad. Sci. U.S.A.">
        <title>Mouse Sebox homeobox gene expression in skin, brain, oocytes, and two-cell embryos.</title>
        <authorList>
            <person name="Cinquanta M."/>
            <person name="Rovescalli A.C."/>
            <person name="Kozak C.A."/>
            <person name="Nirenberg M."/>
        </authorList>
    </citation>
    <scope>NUCLEOTIDE SEQUENCE [GENOMIC DNA]</scope>
    <scope>TISSUE SPECIFICITY</scope>
    <scope>DEVELOPMENTAL STAGE</scope>
</reference>
<reference key="2">
    <citation type="journal article" date="2005" name="Science">
        <title>The transcriptional landscape of the mammalian genome.</title>
        <authorList>
            <person name="Carninci P."/>
            <person name="Kasukawa T."/>
            <person name="Katayama S."/>
            <person name="Gough J."/>
            <person name="Frith M.C."/>
            <person name="Maeda N."/>
            <person name="Oyama R."/>
            <person name="Ravasi T."/>
            <person name="Lenhard B."/>
            <person name="Wells C."/>
            <person name="Kodzius R."/>
            <person name="Shimokawa K."/>
            <person name="Bajic V.B."/>
            <person name="Brenner S.E."/>
            <person name="Batalov S."/>
            <person name="Forrest A.R."/>
            <person name="Zavolan M."/>
            <person name="Davis M.J."/>
            <person name="Wilming L.G."/>
            <person name="Aidinis V."/>
            <person name="Allen J.E."/>
            <person name="Ambesi-Impiombato A."/>
            <person name="Apweiler R."/>
            <person name="Aturaliya R.N."/>
            <person name="Bailey T.L."/>
            <person name="Bansal M."/>
            <person name="Baxter L."/>
            <person name="Beisel K.W."/>
            <person name="Bersano T."/>
            <person name="Bono H."/>
            <person name="Chalk A.M."/>
            <person name="Chiu K.P."/>
            <person name="Choudhary V."/>
            <person name="Christoffels A."/>
            <person name="Clutterbuck D.R."/>
            <person name="Crowe M.L."/>
            <person name="Dalla E."/>
            <person name="Dalrymple B.P."/>
            <person name="de Bono B."/>
            <person name="Della Gatta G."/>
            <person name="di Bernardo D."/>
            <person name="Down T."/>
            <person name="Engstrom P."/>
            <person name="Fagiolini M."/>
            <person name="Faulkner G."/>
            <person name="Fletcher C.F."/>
            <person name="Fukushima T."/>
            <person name="Furuno M."/>
            <person name="Futaki S."/>
            <person name="Gariboldi M."/>
            <person name="Georgii-Hemming P."/>
            <person name="Gingeras T.R."/>
            <person name="Gojobori T."/>
            <person name="Green R.E."/>
            <person name="Gustincich S."/>
            <person name="Harbers M."/>
            <person name="Hayashi Y."/>
            <person name="Hensch T.K."/>
            <person name="Hirokawa N."/>
            <person name="Hill D."/>
            <person name="Huminiecki L."/>
            <person name="Iacono M."/>
            <person name="Ikeo K."/>
            <person name="Iwama A."/>
            <person name="Ishikawa T."/>
            <person name="Jakt M."/>
            <person name="Kanapin A."/>
            <person name="Katoh M."/>
            <person name="Kawasawa Y."/>
            <person name="Kelso J."/>
            <person name="Kitamura H."/>
            <person name="Kitano H."/>
            <person name="Kollias G."/>
            <person name="Krishnan S.P."/>
            <person name="Kruger A."/>
            <person name="Kummerfeld S.K."/>
            <person name="Kurochkin I.V."/>
            <person name="Lareau L.F."/>
            <person name="Lazarevic D."/>
            <person name="Lipovich L."/>
            <person name="Liu J."/>
            <person name="Liuni S."/>
            <person name="McWilliam S."/>
            <person name="Madan Babu M."/>
            <person name="Madera M."/>
            <person name="Marchionni L."/>
            <person name="Matsuda H."/>
            <person name="Matsuzawa S."/>
            <person name="Miki H."/>
            <person name="Mignone F."/>
            <person name="Miyake S."/>
            <person name="Morris K."/>
            <person name="Mottagui-Tabar S."/>
            <person name="Mulder N."/>
            <person name="Nakano N."/>
            <person name="Nakauchi H."/>
            <person name="Ng P."/>
            <person name="Nilsson R."/>
            <person name="Nishiguchi S."/>
            <person name="Nishikawa S."/>
            <person name="Nori F."/>
            <person name="Ohara O."/>
            <person name="Okazaki Y."/>
            <person name="Orlando V."/>
            <person name="Pang K.C."/>
            <person name="Pavan W.J."/>
            <person name="Pavesi G."/>
            <person name="Pesole G."/>
            <person name="Petrovsky N."/>
            <person name="Piazza S."/>
            <person name="Reed J."/>
            <person name="Reid J.F."/>
            <person name="Ring B.Z."/>
            <person name="Ringwald M."/>
            <person name="Rost B."/>
            <person name="Ruan Y."/>
            <person name="Salzberg S.L."/>
            <person name="Sandelin A."/>
            <person name="Schneider C."/>
            <person name="Schoenbach C."/>
            <person name="Sekiguchi K."/>
            <person name="Semple C.A."/>
            <person name="Seno S."/>
            <person name="Sessa L."/>
            <person name="Sheng Y."/>
            <person name="Shibata Y."/>
            <person name="Shimada H."/>
            <person name="Shimada K."/>
            <person name="Silva D."/>
            <person name="Sinclair B."/>
            <person name="Sperling S."/>
            <person name="Stupka E."/>
            <person name="Sugiura K."/>
            <person name="Sultana R."/>
            <person name="Takenaka Y."/>
            <person name="Taki K."/>
            <person name="Tammoja K."/>
            <person name="Tan S.L."/>
            <person name="Tang S."/>
            <person name="Taylor M.S."/>
            <person name="Tegner J."/>
            <person name="Teichmann S.A."/>
            <person name="Ueda H.R."/>
            <person name="van Nimwegen E."/>
            <person name="Verardo R."/>
            <person name="Wei C.L."/>
            <person name="Yagi K."/>
            <person name="Yamanishi H."/>
            <person name="Zabarovsky E."/>
            <person name="Zhu S."/>
            <person name="Zimmer A."/>
            <person name="Hide W."/>
            <person name="Bult C."/>
            <person name="Grimmond S.M."/>
            <person name="Teasdale R.D."/>
            <person name="Liu E.T."/>
            <person name="Brusic V."/>
            <person name="Quackenbush J."/>
            <person name="Wahlestedt C."/>
            <person name="Mattick J.S."/>
            <person name="Hume D.A."/>
            <person name="Kai C."/>
            <person name="Sasaki D."/>
            <person name="Tomaru Y."/>
            <person name="Fukuda S."/>
            <person name="Kanamori-Katayama M."/>
            <person name="Suzuki M."/>
            <person name="Aoki J."/>
            <person name="Arakawa T."/>
            <person name="Iida J."/>
            <person name="Imamura K."/>
            <person name="Itoh M."/>
            <person name="Kato T."/>
            <person name="Kawaji H."/>
            <person name="Kawagashira N."/>
            <person name="Kawashima T."/>
            <person name="Kojima M."/>
            <person name="Kondo S."/>
            <person name="Konno H."/>
            <person name="Nakano K."/>
            <person name="Ninomiya N."/>
            <person name="Nishio T."/>
            <person name="Okada M."/>
            <person name="Plessy C."/>
            <person name="Shibata K."/>
            <person name="Shiraki T."/>
            <person name="Suzuki S."/>
            <person name="Tagami M."/>
            <person name="Waki K."/>
            <person name="Watahiki A."/>
            <person name="Okamura-Oho Y."/>
            <person name="Suzuki H."/>
            <person name="Kawai J."/>
            <person name="Hayashizaki Y."/>
        </authorList>
    </citation>
    <scope>NUCLEOTIDE SEQUENCE [LARGE SCALE MRNA]</scope>
    <source>
        <strain>C57BL/6J</strain>
        <tissue>Ovary</tissue>
    </source>
</reference>
<reference key="3">
    <citation type="journal article" date="2009" name="PLoS Biol.">
        <title>Lineage-specific biology revealed by a finished genome assembly of the mouse.</title>
        <authorList>
            <person name="Church D.M."/>
            <person name="Goodstadt L."/>
            <person name="Hillier L.W."/>
            <person name="Zody M.C."/>
            <person name="Goldstein S."/>
            <person name="She X."/>
            <person name="Bult C.J."/>
            <person name="Agarwala R."/>
            <person name="Cherry J.L."/>
            <person name="DiCuccio M."/>
            <person name="Hlavina W."/>
            <person name="Kapustin Y."/>
            <person name="Meric P."/>
            <person name="Maglott D."/>
            <person name="Birtle Z."/>
            <person name="Marques A.C."/>
            <person name="Graves T."/>
            <person name="Zhou S."/>
            <person name="Teague B."/>
            <person name="Potamousis K."/>
            <person name="Churas C."/>
            <person name="Place M."/>
            <person name="Herschleb J."/>
            <person name="Runnheim R."/>
            <person name="Forrest D."/>
            <person name="Amos-Landgraf J."/>
            <person name="Schwartz D.C."/>
            <person name="Cheng Z."/>
            <person name="Lindblad-Toh K."/>
            <person name="Eichler E.E."/>
            <person name="Ponting C.P."/>
        </authorList>
    </citation>
    <scope>NUCLEOTIDE SEQUENCE [LARGE SCALE GENOMIC DNA]</scope>
    <source>
        <strain>C57BL/6J</strain>
    </source>
</reference>
<reference key="4">
    <citation type="journal article" date="2004" name="Genome Res.">
        <title>The status, quality, and expansion of the NIH full-length cDNA project: the Mammalian Gene Collection (MGC).</title>
        <authorList>
            <consortium name="The MGC Project Team"/>
        </authorList>
    </citation>
    <scope>NUCLEOTIDE SEQUENCE [LARGE SCALE MRNA]</scope>
    <source>
        <tissue>Eye</tissue>
    </source>
</reference>
<reference key="5">
    <citation type="journal article" date="1996" name="Proc. Natl. Acad. Sci. U.S.A.">
        <title>Cloning and characterization of four murine homeobox genes.</title>
        <authorList>
            <person name="Rovescalli A.C."/>
            <person name="Asoh S."/>
            <person name="Nirenberg M.W."/>
        </authorList>
    </citation>
    <scope>NUCLEOTIDE SEQUENCE [MRNA] OF 11-190</scope>
    <scope>TISSUE SPECIFICITY</scope>
    <scope>DEVELOPMENTAL STAGE</scope>
    <source>
        <strain>BALB/cJ</strain>
    </source>
</reference>
<reference key="6">
    <citation type="journal article" date="1996" name="Proc. Natl. Acad. Sci. U.S.A.">
        <authorList>
            <person name="Rovescalli A.C."/>
            <person name="Asoh S."/>
            <person name="Nirenberg M."/>
        </authorList>
    </citation>
    <scope>ERRATUM OF PUBMED:8855241</scope>
</reference>
<proteinExistence type="evidence at transcript level"/>
<protein>
    <recommendedName>
        <fullName>Homeobox protein SEBOX</fullName>
    </recommendedName>
    <alternativeName>
        <fullName>Homeobox OG-9</fullName>
    </alternativeName>
    <alternativeName>
        <fullName>Skin-, embryo-, brain- and oocyte-specific homeobox</fullName>
    </alternativeName>
</protein>
<organism>
    <name type="scientific">Mus musculus</name>
    <name type="common">Mouse</name>
    <dbReference type="NCBI Taxonomy" id="10090"/>
    <lineage>
        <taxon>Eukaryota</taxon>
        <taxon>Metazoa</taxon>
        <taxon>Chordata</taxon>
        <taxon>Craniata</taxon>
        <taxon>Vertebrata</taxon>
        <taxon>Euteleostomi</taxon>
        <taxon>Mammalia</taxon>
        <taxon>Eutheria</taxon>
        <taxon>Euarchontoglires</taxon>
        <taxon>Glires</taxon>
        <taxon>Rodentia</taxon>
        <taxon>Myomorpha</taxon>
        <taxon>Muroidea</taxon>
        <taxon>Muridae</taxon>
        <taxon>Murinae</taxon>
        <taxon>Mus</taxon>
        <taxon>Mus</taxon>
    </lineage>
</organism>
<dbReference type="EMBL" id="U65068">
    <property type="protein sequence ID" value="AAC52829.2"/>
    <property type="molecule type" value="Genomic_DNA"/>
</dbReference>
<dbReference type="EMBL" id="AK143429">
    <property type="protein sequence ID" value="BAE25374.1"/>
    <property type="molecule type" value="mRNA"/>
</dbReference>
<dbReference type="EMBL" id="AL591177">
    <property type="status" value="NOT_ANNOTATED_CDS"/>
    <property type="molecule type" value="Genomic_DNA"/>
</dbReference>
<dbReference type="EMBL" id="BC098184">
    <property type="protein sequence ID" value="AAH98184.1"/>
    <property type="molecule type" value="mRNA"/>
</dbReference>
<dbReference type="CCDS" id="CCDS25107.1"/>
<dbReference type="RefSeq" id="NP_032785.1">
    <property type="nucleotide sequence ID" value="NM_008759.3"/>
</dbReference>
<dbReference type="SMR" id="P70368"/>
<dbReference type="FunCoup" id="P70368">
    <property type="interactions" value="105"/>
</dbReference>
<dbReference type="STRING" id="10090.ENSMUSP00000001130"/>
<dbReference type="PaxDb" id="10090-ENSMUSP00000001130"/>
<dbReference type="Antibodypedia" id="76862">
    <property type="antibodies" value="5 antibodies from 5 providers"/>
</dbReference>
<dbReference type="DNASU" id="18292"/>
<dbReference type="Ensembl" id="ENSMUST00000001130.8">
    <property type="protein sequence ID" value="ENSMUSP00000001130.7"/>
    <property type="gene ID" value="ENSMUSG00000001103.8"/>
</dbReference>
<dbReference type="GeneID" id="18292"/>
<dbReference type="KEGG" id="mmu:18292"/>
<dbReference type="UCSC" id="uc007kjm.2">
    <property type="organism name" value="mouse"/>
</dbReference>
<dbReference type="AGR" id="MGI:108012"/>
<dbReference type="CTD" id="645832"/>
<dbReference type="MGI" id="MGI:108012">
    <property type="gene designation" value="Sebox"/>
</dbReference>
<dbReference type="VEuPathDB" id="HostDB:ENSMUSG00000001103"/>
<dbReference type="eggNOG" id="KOG0490">
    <property type="taxonomic scope" value="Eukaryota"/>
</dbReference>
<dbReference type="GeneTree" id="ENSGT00920000149180"/>
<dbReference type="HOGENOM" id="CLU_080455_0_0_1"/>
<dbReference type="InParanoid" id="P70368"/>
<dbReference type="OMA" id="AFAAWPY"/>
<dbReference type="OrthoDB" id="6159439at2759"/>
<dbReference type="PhylomeDB" id="P70368"/>
<dbReference type="TreeFam" id="TF315976"/>
<dbReference type="BioGRID-ORCS" id="18292">
    <property type="hits" value="2 hits in 77 CRISPR screens"/>
</dbReference>
<dbReference type="ChiTaRS" id="Sebox">
    <property type="organism name" value="mouse"/>
</dbReference>
<dbReference type="PRO" id="PR:P70368"/>
<dbReference type="Proteomes" id="UP000000589">
    <property type="component" value="Chromosome 11"/>
</dbReference>
<dbReference type="RNAct" id="P70368">
    <property type="molecule type" value="protein"/>
</dbReference>
<dbReference type="Bgee" id="ENSMUSG00000001103">
    <property type="expression patterns" value="Expressed in animal zygote and 67 other cell types or tissues"/>
</dbReference>
<dbReference type="ExpressionAtlas" id="P70368">
    <property type="expression patterns" value="baseline and differential"/>
</dbReference>
<dbReference type="GO" id="GO:0005634">
    <property type="term" value="C:nucleus"/>
    <property type="evidence" value="ECO:0007669"/>
    <property type="project" value="UniProtKB-SubCell"/>
</dbReference>
<dbReference type="GO" id="GO:0003677">
    <property type="term" value="F:DNA binding"/>
    <property type="evidence" value="ECO:0007669"/>
    <property type="project" value="UniProtKB-KW"/>
</dbReference>
<dbReference type="GO" id="GO:0009792">
    <property type="term" value="P:embryo development ending in birth or egg hatching"/>
    <property type="evidence" value="ECO:0000315"/>
    <property type="project" value="MGI"/>
</dbReference>
<dbReference type="GO" id="GO:0048477">
    <property type="term" value="P:oogenesis"/>
    <property type="evidence" value="ECO:0000315"/>
    <property type="project" value="MGI"/>
</dbReference>
<dbReference type="CDD" id="cd00086">
    <property type="entry name" value="homeodomain"/>
    <property type="match status" value="1"/>
</dbReference>
<dbReference type="FunFam" id="1.10.10.60:FF:000312">
    <property type="entry name" value="Mix-type homeobox gene 1"/>
    <property type="match status" value="1"/>
</dbReference>
<dbReference type="Gene3D" id="1.10.10.60">
    <property type="entry name" value="Homeodomain-like"/>
    <property type="match status" value="1"/>
</dbReference>
<dbReference type="InterPro" id="IPR001356">
    <property type="entry name" value="HD"/>
</dbReference>
<dbReference type="InterPro" id="IPR009057">
    <property type="entry name" value="Homeodomain-like_sf"/>
</dbReference>
<dbReference type="InterPro" id="IPR042223">
    <property type="entry name" value="SEBOX"/>
</dbReference>
<dbReference type="PANTHER" id="PTHR47777">
    <property type="entry name" value="HOMEOBOX PROTEIN SEBOX"/>
    <property type="match status" value="1"/>
</dbReference>
<dbReference type="PANTHER" id="PTHR47777:SF1">
    <property type="entry name" value="HOMEOBOX PROTEIN SEBOX"/>
    <property type="match status" value="1"/>
</dbReference>
<dbReference type="Pfam" id="PF00046">
    <property type="entry name" value="Homeodomain"/>
    <property type="match status" value="1"/>
</dbReference>
<dbReference type="SMART" id="SM00389">
    <property type="entry name" value="HOX"/>
    <property type="match status" value="1"/>
</dbReference>
<dbReference type="SUPFAM" id="SSF46689">
    <property type="entry name" value="Homeodomain-like"/>
    <property type="match status" value="1"/>
</dbReference>
<dbReference type="PROSITE" id="PS00027">
    <property type="entry name" value="HOMEOBOX_1"/>
    <property type="match status" value="1"/>
</dbReference>
<dbReference type="PROSITE" id="PS50071">
    <property type="entry name" value="HOMEOBOX_2"/>
    <property type="match status" value="1"/>
</dbReference>
<gene>
    <name type="primary">Sebox</name>
    <name type="synonym">Og9x</name>
</gene>
<accession>P70368</accession>
<sequence>MASPVEASPGCASGLGPHRRKRTTFSVGQLVELERVFAARPYPDISTREHLAQVTHLPEAKIQVWFQNRRAKRIKDRKPGALNSRLELPPNSCSLPDTPQLPWDPGTSSHPLHPTSSAQYTSACPPQTSCLGPILGPGQSWSGAKVAAPWGTSGASGIHSSLEQIVPQTSLGNLSDLIYTSAIVTNVDHF</sequence>
<comment type="function">
    <text evidence="1">Probable transcription factor involved in the control of specification of mesoderm and endoderm.</text>
</comment>
<comment type="subcellular location">
    <subcellularLocation>
        <location evidence="2">Nucleus</location>
    </subcellularLocation>
</comment>
<comment type="tissue specificity">
    <text evidence="4 5">Expressed in brain, skin, ovary and liver. Also expressed in maturing oocytes, eggs, zygotes and 2-cell embryos, but not 4-cell embryos.</text>
</comment>
<comment type="developmental stage">
    <text evidence="4 5">Expressed in embryos from day 7. Expression is low in 12 day embryos and higher in 18 and 19 day embryos.</text>
</comment>
<comment type="similarity">
    <text evidence="6">Belongs to the paired homeobox family.</text>
</comment>
<name>SEBOX_MOUSE</name>
<keyword id="KW-0217">Developmental protein</keyword>
<keyword id="KW-0221">Differentiation</keyword>
<keyword id="KW-0238">DNA-binding</keyword>
<keyword id="KW-0371">Homeobox</keyword>
<keyword id="KW-0539">Nucleus</keyword>
<keyword id="KW-1185">Reference proteome</keyword>
<keyword id="KW-0804">Transcription</keyword>
<keyword id="KW-0805">Transcription regulation</keyword>
<feature type="chain" id="PRO_0000311337" description="Homeobox protein SEBOX">
    <location>
        <begin position="1"/>
        <end position="190"/>
    </location>
</feature>
<feature type="DNA-binding region" description="Homeobox" evidence="2">
    <location>
        <begin position="18"/>
        <end position="77"/>
    </location>
</feature>
<feature type="region of interest" description="Disordered" evidence="3">
    <location>
        <begin position="1"/>
        <end position="20"/>
    </location>
</feature>
<feature type="region of interest" description="Disordered" evidence="3">
    <location>
        <begin position="76"/>
        <end position="123"/>
    </location>
</feature>
<feature type="compositionally biased region" description="Polar residues" evidence="3">
    <location>
        <begin position="106"/>
        <end position="123"/>
    </location>
</feature>
<evidence type="ECO:0000250" key="1"/>
<evidence type="ECO:0000255" key="2">
    <source>
        <dbReference type="PROSITE-ProRule" id="PRU00108"/>
    </source>
</evidence>
<evidence type="ECO:0000256" key="3">
    <source>
        <dbReference type="SAM" id="MobiDB-lite"/>
    </source>
</evidence>
<evidence type="ECO:0000269" key="4">
    <source>
    </source>
</evidence>
<evidence type="ECO:0000269" key="5">
    <source>
    </source>
</evidence>
<evidence type="ECO:0000305" key="6"/>